<proteinExistence type="inferred from homology"/>
<dbReference type="EC" id="1.1.99.1" evidence="1"/>
<dbReference type="EC" id="1.2.1.8" evidence="1"/>
<dbReference type="EMBL" id="CP001111">
    <property type="protein sequence ID" value="ACF51536.1"/>
    <property type="molecule type" value="Genomic_DNA"/>
</dbReference>
<dbReference type="RefSeq" id="WP_012510942.1">
    <property type="nucleotide sequence ID" value="NC_011071.1"/>
</dbReference>
<dbReference type="SMR" id="B4SHV9"/>
<dbReference type="STRING" id="391008.Smal_1832"/>
<dbReference type="KEGG" id="smt:Smal_1832"/>
<dbReference type="eggNOG" id="COG2303">
    <property type="taxonomic scope" value="Bacteria"/>
</dbReference>
<dbReference type="HOGENOM" id="CLU_002865_7_1_6"/>
<dbReference type="OrthoDB" id="9785276at2"/>
<dbReference type="UniPathway" id="UPA00529">
    <property type="reaction ID" value="UER00385"/>
</dbReference>
<dbReference type="Proteomes" id="UP000001867">
    <property type="component" value="Chromosome"/>
</dbReference>
<dbReference type="GO" id="GO:0016020">
    <property type="term" value="C:membrane"/>
    <property type="evidence" value="ECO:0007669"/>
    <property type="project" value="TreeGrafter"/>
</dbReference>
<dbReference type="GO" id="GO:0008802">
    <property type="term" value="F:betaine-aldehyde dehydrogenase (NAD+) activity"/>
    <property type="evidence" value="ECO:0007669"/>
    <property type="project" value="UniProtKB-EC"/>
</dbReference>
<dbReference type="GO" id="GO:0008812">
    <property type="term" value="F:choline dehydrogenase activity"/>
    <property type="evidence" value="ECO:0007669"/>
    <property type="project" value="UniProtKB-UniRule"/>
</dbReference>
<dbReference type="GO" id="GO:0050660">
    <property type="term" value="F:flavin adenine dinucleotide binding"/>
    <property type="evidence" value="ECO:0007669"/>
    <property type="project" value="InterPro"/>
</dbReference>
<dbReference type="GO" id="GO:0019285">
    <property type="term" value="P:glycine betaine biosynthetic process from choline"/>
    <property type="evidence" value="ECO:0007669"/>
    <property type="project" value="UniProtKB-UniRule"/>
</dbReference>
<dbReference type="Gene3D" id="3.50.50.60">
    <property type="entry name" value="FAD/NAD(P)-binding domain"/>
    <property type="match status" value="1"/>
</dbReference>
<dbReference type="Gene3D" id="3.30.560.10">
    <property type="entry name" value="Glucose Oxidase, domain 3"/>
    <property type="match status" value="1"/>
</dbReference>
<dbReference type="HAMAP" id="MF_00750">
    <property type="entry name" value="Choline_dehydrogen"/>
    <property type="match status" value="1"/>
</dbReference>
<dbReference type="InterPro" id="IPR011533">
    <property type="entry name" value="BetA"/>
</dbReference>
<dbReference type="InterPro" id="IPR036188">
    <property type="entry name" value="FAD/NAD-bd_sf"/>
</dbReference>
<dbReference type="InterPro" id="IPR012132">
    <property type="entry name" value="GMC_OxRdtase"/>
</dbReference>
<dbReference type="InterPro" id="IPR000172">
    <property type="entry name" value="GMC_OxRdtase_N"/>
</dbReference>
<dbReference type="InterPro" id="IPR007867">
    <property type="entry name" value="GMC_OxRtase_C"/>
</dbReference>
<dbReference type="NCBIfam" id="TIGR01810">
    <property type="entry name" value="betA"/>
    <property type="match status" value="1"/>
</dbReference>
<dbReference type="NCBIfam" id="NF002550">
    <property type="entry name" value="PRK02106.1"/>
    <property type="match status" value="1"/>
</dbReference>
<dbReference type="PANTHER" id="PTHR11552:SF147">
    <property type="entry name" value="CHOLINE DEHYDROGENASE, MITOCHONDRIAL"/>
    <property type="match status" value="1"/>
</dbReference>
<dbReference type="PANTHER" id="PTHR11552">
    <property type="entry name" value="GLUCOSE-METHANOL-CHOLINE GMC OXIDOREDUCTASE"/>
    <property type="match status" value="1"/>
</dbReference>
<dbReference type="Pfam" id="PF05199">
    <property type="entry name" value="GMC_oxred_C"/>
    <property type="match status" value="1"/>
</dbReference>
<dbReference type="Pfam" id="PF00732">
    <property type="entry name" value="GMC_oxred_N"/>
    <property type="match status" value="1"/>
</dbReference>
<dbReference type="PIRSF" id="PIRSF000137">
    <property type="entry name" value="Alcohol_oxidase"/>
    <property type="match status" value="1"/>
</dbReference>
<dbReference type="SUPFAM" id="SSF54373">
    <property type="entry name" value="FAD-linked reductases, C-terminal domain"/>
    <property type="match status" value="1"/>
</dbReference>
<dbReference type="SUPFAM" id="SSF51905">
    <property type="entry name" value="FAD/NAD(P)-binding domain"/>
    <property type="match status" value="1"/>
</dbReference>
<dbReference type="PROSITE" id="PS00623">
    <property type="entry name" value="GMC_OXRED_1"/>
    <property type="match status" value="1"/>
</dbReference>
<dbReference type="PROSITE" id="PS00624">
    <property type="entry name" value="GMC_OXRED_2"/>
    <property type="match status" value="1"/>
</dbReference>
<name>BETA_STRM5</name>
<feature type="chain" id="PRO_1000133338" description="Oxygen-dependent choline dehydrogenase">
    <location>
        <begin position="1"/>
        <end position="560"/>
    </location>
</feature>
<feature type="active site" description="Proton acceptor" evidence="1">
    <location>
        <position position="475"/>
    </location>
</feature>
<feature type="binding site" evidence="1">
    <location>
        <begin position="8"/>
        <end position="37"/>
    </location>
    <ligand>
        <name>FAD</name>
        <dbReference type="ChEBI" id="CHEBI:57692"/>
    </ligand>
</feature>
<comment type="function">
    <text evidence="1">Involved in the biosynthesis of the osmoprotectant glycine betaine. Catalyzes the oxidation of choline to betaine aldehyde and betaine aldehyde to glycine betaine at the same rate.</text>
</comment>
<comment type="catalytic activity">
    <reaction evidence="1">
        <text>choline + A = betaine aldehyde + AH2</text>
        <dbReference type="Rhea" id="RHEA:17433"/>
        <dbReference type="ChEBI" id="CHEBI:13193"/>
        <dbReference type="ChEBI" id="CHEBI:15354"/>
        <dbReference type="ChEBI" id="CHEBI:15710"/>
        <dbReference type="ChEBI" id="CHEBI:17499"/>
        <dbReference type="EC" id="1.1.99.1"/>
    </reaction>
</comment>
<comment type="catalytic activity">
    <reaction evidence="1">
        <text>betaine aldehyde + NAD(+) + H2O = glycine betaine + NADH + 2 H(+)</text>
        <dbReference type="Rhea" id="RHEA:15305"/>
        <dbReference type="ChEBI" id="CHEBI:15377"/>
        <dbReference type="ChEBI" id="CHEBI:15378"/>
        <dbReference type="ChEBI" id="CHEBI:15710"/>
        <dbReference type="ChEBI" id="CHEBI:17750"/>
        <dbReference type="ChEBI" id="CHEBI:57540"/>
        <dbReference type="ChEBI" id="CHEBI:57945"/>
        <dbReference type="EC" id="1.2.1.8"/>
    </reaction>
</comment>
<comment type="cofactor">
    <cofactor evidence="1">
        <name>FAD</name>
        <dbReference type="ChEBI" id="CHEBI:57692"/>
    </cofactor>
</comment>
<comment type="pathway">
    <text evidence="1">Amine and polyamine biosynthesis; betaine biosynthesis via choline pathway; betaine aldehyde from choline (cytochrome c reductase route): step 1/1.</text>
</comment>
<comment type="similarity">
    <text evidence="1">Belongs to the GMC oxidoreductase family.</text>
</comment>
<sequence length="560" mass="61735">MSTHNEYDYIIIGAGSAGNVLATRLTEDADVSVLLLEAGGPDYRLDFRTQMPAALAFPLQGKRYNWAYKTDPEPFMNNRRMDCGRGKGLGGSSLINGMCYIRGNAMDYDNWASMPGLEDWTYLDCLPYFRKAETRDIGPNDYHGGEGPLRVTTPKAGNNELFAAMVEAGVQAGYPRTDDLNGYQQEGFGPMDRTVTPKGRRSSTARGYLDLAKPRPNLTIVTHALTDRILFSGKRAVGVQWLHNDQPQRATARREVLLCGGAIASPQILQRSGVGPADLLRSLDIDLVHHLPGVGANLQDHLEMYLQYECKKPVSLAPALKLYNQPAIGAEWLFLGTGIGASNQFEAGGFIRSDTEFDWPNLQYHFLPVAINYNGSNPIKAHSFQMHVGSMRSPSRGRIHVRSKDPREHPSILFNYMSHDQDWREFRAAIRITREIFAQPALAPYSGREISPGSALQTDAQIDAFVREHAETAYHPSCSNKMGHADDPMAVVDGQGRVHGLEGLRIVDASIMPQVVTGNLNAPTIMIAEKLADVIRGRTPLARSTAPYYKANGAPVRKQG</sequence>
<organism>
    <name type="scientific">Stenotrophomonas maltophilia (strain R551-3)</name>
    <dbReference type="NCBI Taxonomy" id="391008"/>
    <lineage>
        <taxon>Bacteria</taxon>
        <taxon>Pseudomonadati</taxon>
        <taxon>Pseudomonadota</taxon>
        <taxon>Gammaproteobacteria</taxon>
        <taxon>Lysobacterales</taxon>
        <taxon>Lysobacteraceae</taxon>
        <taxon>Stenotrophomonas</taxon>
        <taxon>Stenotrophomonas maltophilia group</taxon>
    </lineage>
</organism>
<gene>
    <name evidence="1" type="primary">betA</name>
    <name type="ordered locus">Smal_1832</name>
</gene>
<protein>
    <recommendedName>
        <fullName evidence="1">Oxygen-dependent choline dehydrogenase</fullName>
        <shortName evidence="1">CDH</shortName>
        <shortName evidence="1">CHD</shortName>
        <ecNumber evidence="1">1.1.99.1</ecNumber>
    </recommendedName>
    <alternativeName>
        <fullName evidence="1">Betaine aldehyde dehydrogenase</fullName>
        <shortName evidence="1">BADH</shortName>
        <ecNumber evidence="1">1.2.1.8</ecNumber>
    </alternativeName>
</protein>
<evidence type="ECO:0000255" key="1">
    <source>
        <dbReference type="HAMAP-Rule" id="MF_00750"/>
    </source>
</evidence>
<accession>B4SHV9</accession>
<reference key="1">
    <citation type="submission" date="2008-06" db="EMBL/GenBank/DDBJ databases">
        <title>Complete sequence of Stenotrophomonas maltophilia R551-3.</title>
        <authorList>
            <consortium name="US DOE Joint Genome Institute"/>
            <person name="Lucas S."/>
            <person name="Copeland A."/>
            <person name="Lapidus A."/>
            <person name="Glavina del Rio T."/>
            <person name="Dalin E."/>
            <person name="Tice H."/>
            <person name="Pitluck S."/>
            <person name="Chain P."/>
            <person name="Malfatti S."/>
            <person name="Shin M."/>
            <person name="Vergez L."/>
            <person name="Lang D."/>
            <person name="Schmutz J."/>
            <person name="Larimer F."/>
            <person name="Land M."/>
            <person name="Hauser L."/>
            <person name="Kyrpides N."/>
            <person name="Mikhailova N."/>
            <person name="Taghavi S."/>
            <person name="Monchy S."/>
            <person name="Newman L."/>
            <person name="Vangronsveld J."/>
            <person name="van der Lelie D."/>
            <person name="Richardson P."/>
        </authorList>
    </citation>
    <scope>NUCLEOTIDE SEQUENCE [LARGE SCALE GENOMIC DNA]</scope>
    <source>
        <strain>R551-3</strain>
    </source>
</reference>
<keyword id="KW-0274">FAD</keyword>
<keyword id="KW-0285">Flavoprotein</keyword>
<keyword id="KW-0520">NAD</keyword>
<keyword id="KW-0560">Oxidoreductase</keyword>